<organism>
    <name type="scientific">Methanothermococcus thermolithotrophicus</name>
    <name type="common">Methanococcus thermolithotrophicus</name>
    <dbReference type="NCBI Taxonomy" id="2186"/>
    <lineage>
        <taxon>Archaea</taxon>
        <taxon>Methanobacteriati</taxon>
        <taxon>Methanobacteriota</taxon>
        <taxon>Methanomada group</taxon>
        <taxon>Methanococci</taxon>
        <taxon>Methanococcales</taxon>
        <taxon>Methanococcaceae</taxon>
        <taxon>Methanothermococcus</taxon>
    </lineage>
</organism>
<dbReference type="EC" id="1.18.6.1"/>
<dbReference type="EMBL" id="X13830">
    <property type="protein sequence ID" value="CAA32055.1"/>
    <property type="molecule type" value="Genomic_DNA"/>
</dbReference>
<dbReference type="PIR" id="S06984">
    <property type="entry name" value="S06984"/>
</dbReference>
<dbReference type="PDB" id="8Q50">
    <property type="method" value="X-ray"/>
    <property type="resolution" value="1.91 A"/>
    <property type="chains" value="A=1-284"/>
</dbReference>
<dbReference type="PDB" id="8Q5T">
    <property type="method" value="X-ray"/>
    <property type="resolution" value="2.31 A"/>
    <property type="chains" value="A/B/C/D=1-284"/>
</dbReference>
<dbReference type="PDB" id="8Q5V">
    <property type="method" value="X-ray"/>
    <property type="resolution" value="2.74 A"/>
    <property type="chains" value="A/B/C/D/E/F/G/H/J/K/L/M=1-284"/>
</dbReference>
<dbReference type="PDBsum" id="8Q50"/>
<dbReference type="PDBsum" id="8Q5T"/>
<dbReference type="PDBsum" id="8Q5V"/>
<dbReference type="SMR" id="P25767"/>
<dbReference type="GO" id="GO:0051539">
    <property type="term" value="F:4 iron, 4 sulfur cluster binding"/>
    <property type="evidence" value="ECO:0007669"/>
    <property type="project" value="UniProtKB-KW"/>
</dbReference>
<dbReference type="GO" id="GO:0005524">
    <property type="term" value="F:ATP binding"/>
    <property type="evidence" value="ECO:0007669"/>
    <property type="project" value="UniProtKB-UniRule"/>
</dbReference>
<dbReference type="GO" id="GO:0046872">
    <property type="term" value="F:metal ion binding"/>
    <property type="evidence" value="ECO:0007669"/>
    <property type="project" value="UniProtKB-KW"/>
</dbReference>
<dbReference type="GO" id="GO:0016163">
    <property type="term" value="F:nitrogenase activity"/>
    <property type="evidence" value="ECO:0007669"/>
    <property type="project" value="UniProtKB-UniRule"/>
</dbReference>
<dbReference type="GO" id="GO:0009399">
    <property type="term" value="P:nitrogen fixation"/>
    <property type="evidence" value="ECO:0007669"/>
    <property type="project" value="UniProtKB-UniRule"/>
</dbReference>
<dbReference type="CDD" id="cd02040">
    <property type="entry name" value="NifH"/>
    <property type="match status" value="1"/>
</dbReference>
<dbReference type="Gene3D" id="3.40.50.300">
    <property type="entry name" value="P-loop containing nucleotide triphosphate hydrolases"/>
    <property type="match status" value="1"/>
</dbReference>
<dbReference type="HAMAP" id="MF_00533">
    <property type="entry name" value="NifH"/>
    <property type="match status" value="1"/>
</dbReference>
<dbReference type="InterPro" id="IPR030655">
    <property type="entry name" value="NifH/chlL_CS"/>
</dbReference>
<dbReference type="InterPro" id="IPR000392">
    <property type="entry name" value="NifH/frxC"/>
</dbReference>
<dbReference type="InterPro" id="IPR005977">
    <property type="entry name" value="Nitrogenase_Fe_NifH"/>
</dbReference>
<dbReference type="InterPro" id="IPR027417">
    <property type="entry name" value="P-loop_NTPase"/>
</dbReference>
<dbReference type="NCBIfam" id="TIGR01287">
    <property type="entry name" value="nifH"/>
    <property type="match status" value="1"/>
</dbReference>
<dbReference type="PANTHER" id="PTHR42864">
    <property type="entry name" value="LIGHT-INDEPENDENT PROTOCHLOROPHYLLIDE REDUCTASE IRON-SULFUR ATP-BINDING PROTEIN"/>
    <property type="match status" value="1"/>
</dbReference>
<dbReference type="PANTHER" id="PTHR42864:SF2">
    <property type="entry name" value="LIGHT-INDEPENDENT PROTOCHLOROPHYLLIDE REDUCTASE IRON-SULFUR ATP-BINDING PROTEIN"/>
    <property type="match status" value="1"/>
</dbReference>
<dbReference type="Pfam" id="PF00142">
    <property type="entry name" value="Fer4_NifH"/>
    <property type="match status" value="1"/>
</dbReference>
<dbReference type="PIRSF" id="PIRSF000363">
    <property type="entry name" value="Nitrogenase_iron"/>
    <property type="match status" value="1"/>
</dbReference>
<dbReference type="PRINTS" id="PR00091">
    <property type="entry name" value="NITROGNASEII"/>
</dbReference>
<dbReference type="SUPFAM" id="SSF52540">
    <property type="entry name" value="P-loop containing nucleoside triphosphate hydrolases"/>
    <property type="match status" value="1"/>
</dbReference>
<dbReference type="PROSITE" id="PS00746">
    <property type="entry name" value="NIFH_FRXC_1"/>
    <property type="match status" value="1"/>
</dbReference>
<dbReference type="PROSITE" id="PS00692">
    <property type="entry name" value="NIFH_FRXC_2"/>
    <property type="match status" value="1"/>
</dbReference>
<dbReference type="PROSITE" id="PS51026">
    <property type="entry name" value="NIFH_FRXC_3"/>
    <property type="match status" value="1"/>
</dbReference>
<proteinExistence type="evidence at protein level"/>
<sequence>MSFDEIAPDAKKVAIYGKGGIGKSTTTQNTAAALAYFFDKKVMIHGCDPKADSTRMILHGKPQDTVMDVLREEGEEAVTLEKVRKIGFKDILCVESGGPEPGVGCAGRGVITAVDMMRELEGYPDDLDNLFFDVLGDVVCGGFAMPLRDGLAQEIYIVTSGEMMALYAANNIAKGILKYAEQSGVRLGGIICNARNVDGEKELMDEFCDKLGTKLIHYVPRDNIVQKAEFNKMTVIEFDPECNQAKEYRTLAKNIDENDELVKPTPMTMDELEELVVKYGLIDL</sequence>
<accession>P25767</accession>
<gene>
    <name type="primary">nifH1</name>
</gene>
<name>NIFH1_METTL</name>
<reference key="1">
    <citation type="journal article" date="1989" name="Mol. Microbiol.">
        <title>Primary structure, functional organization and expression of nitrogenase structural genes of the thermophilic archaebacterium Methanococcus thermolithotrophicus.</title>
        <authorList>
            <person name="Souillard N."/>
            <person name="Sibold L."/>
        </authorList>
    </citation>
    <scope>NUCLEOTIDE SEQUENCE [GENOMIC DNA]</scope>
</reference>
<feature type="chain" id="PRO_0000139544" description="Nitrogenase iron protein 1">
    <location>
        <begin position="1"/>
        <end position="284"/>
    </location>
</feature>
<feature type="binding site" evidence="2">
    <location>
        <begin position="17"/>
        <end position="24"/>
    </location>
    <ligand>
        <name>ATP</name>
        <dbReference type="ChEBI" id="CHEBI:30616"/>
    </ligand>
</feature>
<feature type="binding site" evidence="1">
    <location>
        <position position="105"/>
    </location>
    <ligand>
        <name>[4Fe-4S] cluster</name>
        <dbReference type="ChEBI" id="CHEBI:49883"/>
        <note>ligand shared between dimeric partners</note>
    </ligand>
</feature>
<feature type="binding site" evidence="1">
    <location>
        <position position="140"/>
    </location>
    <ligand>
        <name>[4Fe-4S] cluster</name>
        <dbReference type="ChEBI" id="CHEBI:49883"/>
        <note>ligand shared between dimeric partners</note>
    </ligand>
</feature>
<feature type="modified residue" description="ADP-ribosylarginine; by dinitrogenase reductase ADP-ribosyltransferase" evidence="1">
    <location>
        <position position="108"/>
    </location>
</feature>
<feature type="helix" evidence="5">
    <location>
        <begin position="3"/>
        <end position="5"/>
    </location>
</feature>
<feature type="strand" evidence="4">
    <location>
        <begin position="10"/>
        <end position="17"/>
    </location>
</feature>
<feature type="strand" evidence="4">
    <location>
        <begin position="19"/>
        <end position="22"/>
    </location>
</feature>
<feature type="helix" evidence="4">
    <location>
        <begin position="23"/>
        <end position="38"/>
    </location>
</feature>
<feature type="strand" evidence="4">
    <location>
        <begin position="42"/>
        <end position="47"/>
    </location>
</feature>
<feature type="turn" evidence="4">
    <location>
        <begin position="55"/>
        <end position="60"/>
    </location>
</feature>
<feature type="helix" evidence="4">
    <location>
        <begin position="66"/>
        <end position="72"/>
    </location>
</feature>
<feature type="turn" evidence="5">
    <location>
        <begin position="75"/>
        <end position="77"/>
    </location>
</feature>
<feature type="helix" evidence="4">
    <location>
        <begin position="80"/>
        <end position="83"/>
    </location>
</feature>
<feature type="strand" evidence="4">
    <location>
        <begin position="84"/>
        <end position="86"/>
    </location>
</feature>
<feature type="helix" evidence="4">
    <location>
        <begin position="88"/>
        <end position="90"/>
    </location>
</feature>
<feature type="strand" evidence="4">
    <location>
        <begin position="92"/>
        <end position="95"/>
    </location>
</feature>
<feature type="turn" evidence="4">
    <location>
        <begin position="101"/>
        <end position="103"/>
    </location>
</feature>
<feature type="helix" evidence="4">
    <location>
        <begin position="106"/>
        <end position="119"/>
    </location>
</feature>
<feature type="strand" evidence="4">
    <location>
        <begin position="128"/>
        <end position="135"/>
    </location>
</feature>
<feature type="helix" evidence="4">
    <location>
        <begin position="141"/>
        <end position="149"/>
    </location>
</feature>
<feature type="strand" evidence="4">
    <location>
        <begin position="153"/>
        <end position="159"/>
    </location>
</feature>
<feature type="helix" evidence="4">
    <location>
        <begin position="163"/>
        <end position="183"/>
    </location>
</feature>
<feature type="strand" evidence="4">
    <location>
        <begin position="186"/>
        <end position="193"/>
    </location>
</feature>
<feature type="strand" evidence="5">
    <location>
        <begin position="195"/>
        <end position="198"/>
    </location>
</feature>
<feature type="helix" evidence="4">
    <location>
        <begin position="200"/>
        <end position="210"/>
    </location>
</feature>
<feature type="strand" evidence="4">
    <location>
        <begin position="215"/>
        <end position="219"/>
    </location>
</feature>
<feature type="helix" evidence="4">
    <location>
        <begin position="224"/>
        <end position="230"/>
    </location>
</feature>
<feature type="helix" evidence="4">
    <location>
        <begin position="235"/>
        <end position="238"/>
    </location>
</feature>
<feature type="helix" evidence="4">
    <location>
        <begin position="243"/>
        <end position="257"/>
    </location>
</feature>
<feature type="helix" evidence="4">
    <location>
        <begin position="269"/>
        <end position="278"/>
    </location>
</feature>
<protein>
    <recommendedName>
        <fullName>Nitrogenase iron protein 1</fullName>
        <ecNumber>1.18.6.1</ecNumber>
    </recommendedName>
    <alternativeName>
        <fullName>Nitrogenase Fe protein 1</fullName>
    </alternativeName>
    <alternativeName>
        <fullName>Nitrogenase component II</fullName>
    </alternativeName>
    <alternativeName>
        <fullName>Nitrogenase reductase</fullName>
    </alternativeName>
</protein>
<comment type="function">
    <text evidence="1">The key enzymatic reactions in nitrogen fixation are catalyzed by the nitrogenase complex, which has 2 components: the iron protein and the molybdenum-iron protein.</text>
</comment>
<comment type="catalytic activity">
    <reaction>
        <text>N2 + 8 reduced [2Fe-2S]-[ferredoxin] + 16 ATP + 16 H2O = H2 + 8 oxidized [2Fe-2S]-[ferredoxin] + 2 NH4(+) + 16 ADP + 16 phosphate + 6 H(+)</text>
        <dbReference type="Rhea" id="RHEA:21448"/>
        <dbReference type="Rhea" id="RHEA-COMP:10000"/>
        <dbReference type="Rhea" id="RHEA-COMP:10001"/>
        <dbReference type="ChEBI" id="CHEBI:15377"/>
        <dbReference type="ChEBI" id="CHEBI:15378"/>
        <dbReference type="ChEBI" id="CHEBI:17997"/>
        <dbReference type="ChEBI" id="CHEBI:18276"/>
        <dbReference type="ChEBI" id="CHEBI:28938"/>
        <dbReference type="ChEBI" id="CHEBI:30616"/>
        <dbReference type="ChEBI" id="CHEBI:33737"/>
        <dbReference type="ChEBI" id="CHEBI:33738"/>
        <dbReference type="ChEBI" id="CHEBI:43474"/>
        <dbReference type="ChEBI" id="CHEBI:456216"/>
        <dbReference type="EC" id="1.18.6.1"/>
    </reaction>
</comment>
<comment type="cofactor">
    <cofactor evidence="1">
        <name>[4Fe-4S] cluster</name>
        <dbReference type="ChEBI" id="CHEBI:49883"/>
    </cofactor>
    <text evidence="1">Binds 1 [4Fe-4S] cluster per dimer.</text>
</comment>
<comment type="subunit">
    <text evidence="1">Homodimer.</text>
</comment>
<comment type="PTM">
    <text evidence="1">The reversible ADP-ribosylation of Arg-108 inactivates the nitrogenase reductase and regulates nitrogenase activity.</text>
</comment>
<comment type="similarity">
    <text evidence="3">Belongs to the NifH/BchL/ChlL family.</text>
</comment>
<evidence type="ECO:0000250" key="1"/>
<evidence type="ECO:0000255" key="2"/>
<evidence type="ECO:0000305" key="3"/>
<evidence type="ECO:0007829" key="4">
    <source>
        <dbReference type="PDB" id="8Q50"/>
    </source>
</evidence>
<evidence type="ECO:0007829" key="5">
    <source>
        <dbReference type="PDB" id="8Q5T"/>
    </source>
</evidence>
<keyword id="KW-0002">3D-structure</keyword>
<keyword id="KW-0004">4Fe-4S</keyword>
<keyword id="KW-0013">ADP-ribosylation</keyword>
<keyword id="KW-0067">ATP-binding</keyword>
<keyword id="KW-0408">Iron</keyword>
<keyword id="KW-0411">Iron-sulfur</keyword>
<keyword id="KW-0479">Metal-binding</keyword>
<keyword id="KW-0535">Nitrogen fixation</keyword>
<keyword id="KW-0547">Nucleotide-binding</keyword>
<keyword id="KW-0560">Oxidoreductase</keyword>